<feature type="chain" id="PRO_0000287037" description="Putative cyclin-D6-1">
    <location>
        <begin position="1"/>
        <end position="302"/>
    </location>
</feature>
<sequence>MEFHLEHPLSHSSLHNNFNDDTDYETLPHSLFLVEFQHMPSSHYFHSLKSSAFLLSNRNQAISSITQYSRKFDDPSLTYLAVNYLDRFLSSEDMPQSKPWILKLISLSCVSLSAKMRKPDMSVSDLPVEGEFFDAQMIERMENVILGALKWRMRSVTPFSFLAFFISLFELKEEDPLLLKHSLKSQTSDLTFSLQHDISFLEFKPSVIAGAALLFASFELCPLQFPCFSNRINQCTYVNKDELMECYKAIQERDIIVGENEGSTETAVNVLDQQFSSCESDKSITITASSSPKRRKTSTRRY</sequence>
<protein>
    <recommendedName>
        <fullName>Putative cyclin-D6-1</fullName>
    </recommendedName>
    <alternativeName>
        <fullName>G1/S-specific cyclin-D6-1</fullName>
        <shortName>CycD6;1</shortName>
    </alternativeName>
</protein>
<keyword id="KW-0131">Cell cycle</keyword>
<keyword id="KW-0132">Cell division</keyword>
<keyword id="KW-0195">Cyclin</keyword>
<keyword id="KW-1185">Reference proteome</keyword>
<name>CCD61_ARATH</name>
<evidence type="ECO:0000305" key="1"/>
<comment type="similarity">
    <text evidence="1">Belongs to the cyclin family. Cyclin D subfamily.</text>
</comment>
<accession>Q9ZR04</accession>
<dbReference type="EMBL" id="AC005275">
    <property type="protein sequence ID" value="AAD14455.1"/>
    <property type="molecule type" value="Genomic_DNA"/>
</dbReference>
<dbReference type="EMBL" id="AL161496">
    <property type="protein sequence ID" value="CAB77812.1"/>
    <property type="molecule type" value="Genomic_DNA"/>
</dbReference>
<dbReference type="EMBL" id="CP002687">
    <property type="protein sequence ID" value="AEE82300.1"/>
    <property type="molecule type" value="Genomic_DNA"/>
</dbReference>
<dbReference type="PIR" id="E85041">
    <property type="entry name" value="E85041"/>
</dbReference>
<dbReference type="RefSeq" id="NP_192236.1">
    <property type="nucleotide sequence ID" value="NM_116565.2"/>
</dbReference>
<dbReference type="SMR" id="Q9ZR04"/>
<dbReference type="BioGRID" id="13291">
    <property type="interactions" value="16"/>
</dbReference>
<dbReference type="FunCoup" id="Q9ZR04">
    <property type="interactions" value="390"/>
</dbReference>
<dbReference type="IntAct" id="Q9ZR04">
    <property type="interactions" value="7"/>
</dbReference>
<dbReference type="STRING" id="3702.Q9ZR04"/>
<dbReference type="PaxDb" id="3702-AT4G03270.1"/>
<dbReference type="EnsemblPlants" id="AT4G03270.1">
    <property type="protein sequence ID" value="AT4G03270.1"/>
    <property type="gene ID" value="AT4G03270"/>
</dbReference>
<dbReference type="GeneID" id="828000"/>
<dbReference type="Gramene" id="AT4G03270.1">
    <property type="protein sequence ID" value="AT4G03270.1"/>
    <property type="gene ID" value="AT4G03270"/>
</dbReference>
<dbReference type="KEGG" id="ath:AT4G03270"/>
<dbReference type="Araport" id="AT4G03270"/>
<dbReference type="TAIR" id="AT4G03270">
    <property type="gene designation" value="CYCD6"/>
</dbReference>
<dbReference type="eggNOG" id="KOG0656">
    <property type="taxonomic scope" value="Eukaryota"/>
</dbReference>
<dbReference type="HOGENOM" id="CLU_048040_3_1_1"/>
<dbReference type="InParanoid" id="Q9ZR04"/>
<dbReference type="OMA" id="CYNVIQD"/>
<dbReference type="PhylomeDB" id="Q9ZR04"/>
<dbReference type="PRO" id="PR:Q9ZR04"/>
<dbReference type="Proteomes" id="UP000006548">
    <property type="component" value="Chromosome 4"/>
</dbReference>
<dbReference type="ExpressionAtlas" id="Q9ZR04">
    <property type="expression patterns" value="baseline and differential"/>
</dbReference>
<dbReference type="GO" id="GO:0051301">
    <property type="term" value="P:cell division"/>
    <property type="evidence" value="ECO:0007669"/>
    <property type="project" value="UniProtKB-KW"/>
</dbReference>
<dbReference type="CDD" id="cd20543">
    <property type="entry name" value="CYCLIN_AtCycD-like_rpt1"/>
    <property type="match status" value="1"/>
</dbReference>
<dbReference type="CDD" id="cd20544">
    <property type="entry name" value="CYCLIN_AtCycD-like_rpt2"/>
    <property type="match status" value="1"/>
</dbReference>
<dbReference type="FunFam" id="1.10.472.10:FF:000040">
    <property type="entry name" value="D6-type cyclin"/>
    <property type="match status" value="1"/>
</dbReference>
<dbReference type="FunFam" id="1.10.472.10:FF:000060">
    <property type="entry name" value="D6-type cyclin"/>
    <property type="match status" value="1"/>
</dbReference>
<dbReference type="Gene3D" id="1.10.472.10">
    <property type="entry name" value="Cyclin-like"/>
    <property type="match status" value="2"/>
</dbReference>
<dbReference type="InterPro" id="IPR039361">
    <property type="entry name" value="Cyclin"/>
</dbReference>
<dbReference type="InterPro" id="IPR013763">
    <property type="entry name" value="Cyclin-like_dom"/>
</dbReference>
<dbReference type="InterPro" id="IPR036915">
    <property type="entry name" value="Cyclin-like_sf"/>
</dbReference>
<dbReference type="InterPro" id="IPR004367">
    <property type="entry name" value="Cyclin_C-dom"/>
</dbReference>
<dbReference type="InterPro" id="IPR006671">
    <property type="entry name" value="Cyclin_N"/>
</dbReference>
<dbReference type="PANTHER" id="PTHR10177">
    <property type="entry name" value="CYCLINS"/>
    <property type="match status" value="1"/>
</dbReference>
<dbReference type="Pfam" id="PF02984">
    <property type="entry name" value="Cyclin_C"/>
    <property type="match status" value="1"/>
</dbReference>
<dbReference type="Pfam" id="PF00134">
    <property type="entry name" value="Cyclin_N"/>
    <property type="match status" value="1"/>
</dbReference>
<dbReference type="SMART" id="SM00385">
    <property type="entry name" value="CYCLIN"/>
    <property type="match status" value="1"/>
</dbReference>
<dbReference type="SMART" id="SM01332">
    <property type="entry name" value="Cyclin_C"/>
    <property type="match status" value="1"/>
</dbReference>
<dbReference type="SUPFAM" id="SSF47954">
    <property type="entry name" value="Cyclin-like"/>
    <property type="match status" value="2"/>
</dbReference>
<organism>
    <name type="scientific">Arabidopsis thaliana</name>
    <name type="common">Mouse-ear cress</name>
    <dbReference type="NCBI Taxonomy" id="3702"/>
    <lineage>
        <taxon>Eukaryota</taxon>
        <taxon>Viridiplantae</taxon>
        <taxon>Streptophyta</taxon>
        <taxon>Embryophyta</taxon>
        <taxon>Tracheophyta</taxon>
        <taxon>Spermatophyta</taxon>
        <taxon>Magnoliopsida</taxon>
        <taxon>eudicotyledons</taxon>
        <taxon>Gunneridae</taxon>
        <taxon>Pentapetalae</taxon>
        <taxon>rosids</taxon>
        <taxon>malvids</taxon>
        <taxon>Brassicales</taxon>
        <taxon>Brassicaceae</taxon>
        <taxon>Camelineae</taxon>
        <taxon>Arabidopsis</taxon>
    </lineage>
</organism>
<proteinExistence type="inferred from homology"/>
<gene>
    <name type="primary">CYCD6-1</name>
    <name type="ordered locus">At4g03270</name>
    <name type="ORF">F4C21.20</name>
</gene>
<reference key="1">
    <citation type="journal article" date="1999" name="Nature">
        <title>Sequence and analysis of chromosome 4 of the plant Arabidopsis thaliana.</title>
        <authorList>
            <person name="Mayer K.F.X."/>
            <person name="Schueller C."/>
            <person name="Wambutt R."/>
            <person name="Murphy G."/>
            <person name="Volckaert G."/>
            <person name="Pohl T."/>
            <person name="Duesterhoeft A."/>
            <person name="Stiekema W."/>
            <person name="Entian K.-D."/>
            <person name="Terryn N."/>
            <person name="Harris B."/>
            <person name="Ansorge W."/>
            <person name="Brandt P."/>
            <person name="Grivell L.A."/>
            <person name="Rieger M."/>
            <person name="Weichselgartner M."/>
            <person name="de Simone V."/>
            <person name="Obermaier B."/>
            <person name="Mache R."/>
            <person name="Mueller M."/>
            <person name="Kreis M."/>
            <person name="Delseny M."/>
            <person name="Puigdomenech P."/>
            <person name="Watson M."/>
            <person name="Schmidtheini T."/>
            <person name="Reichert B."/>
            <person name="Portetelle D."/>
            <person name="Perez-Alonso M."/>
            <person name="Boutry M."/>
            <person name="Bancroft I."/>
            <person name="Vos P."/>
            <person name="Hoheisel J."/>
            <person name="Zimmermann W."/>
            <person name="Wedler H."/>
            <person name="Ridley P."/>
            <person name="Langham S.-A."/>
            <person name="McCullagh B."/>
            <person name="Bilham L."/>
            <person name="Robben J."/>
            <person name="van der Schueren J."/>
            <person name="Grymonprez B."/>
            <person name="Chuang Y.-J."/>
            <person name="Vandenbussche F."/>
            <person name="Braeken M."/>
            <person name="Weltjens I."/>
            <person name="Voet M."/>
            <person name="Bastiaens I."/>
            <person name="Aert R."/>
            <person name="Defoor E."/>
            <person name="Weitzenegger T."/>
            <person name="Bothe G."/>
            <person name="Ramsperger U."/>
            <person name="Hilbert H."/>
            <person name="Braun M."/>
            <person name="Holzer E."/>
            <person name="Brandt A."/>
            <person name="Peters S."/>
            <person name="van Staveren M."/>
            <person name="Dirkse W."/>
            <person name="Mooijman P."/>
            <person name="Klein Lankhorst R."/>
            <person name="Rose M."/>
            <person name="Hauf J."/>
            <person name="Koetter P."/>
            <person name="Berneiser S."/>
            <person name="Hempel S."/>
            <person name="Feldpausch M."/>
            <person name="Lamberth S."/>
            <person name="Van den Daele H."/>
            <person name="De Keyser A."/>
            <person name="Buysshaert C."/>
            <person name="Gielen J."/>
            <person name="Villarroel R."/>
            <person name="De Clercq R."/>
            <person name="van Montagu M."/>
            <person name="Rogers J."/>
            <person name="Cronin A."/>
            <person name="Quail M.A."/>
            <person name="Bray-Allen S."/>
            <person name="Clark L."/>
            <person name="Doggett J."/>
            <person name="Hall S."/>
            <person name="Kay M."/>
            <person name="Lennard N."/>
            <person name="McLay K."/>
            <person name="Mayes R."/>
            <person name="Pettett A."/>
            <person name="Rajandream M.A."/>
            <person name="Lyne M."/>
            <person name="Benes V."/>
            <person name="Rechmann S."/>
            <person name="Borkova D."/>
            <person name="Bloecker H."/>
            <person name="Scharfe M."/>
            <person name="Grimm M."/>
            <person name="Loehnert T.-H."/>
            <person name="Dose S."/>
            <person name="de Haan M."/>
            <person name="Maarse A.C."/>
            <person name="Schaefer M."/>
            <person name="Mueller-Auer S."/>
            <person name="Gabel C."/>
            <person name="Fuchs M."/>
            <person name="Fartmann B."/>
            <person name="Granderath K."/>
            <person name="Dauner D."/>
            <person name="Herzl A."/>
            <person name="Neumann S."/>
            <person name="Argiriou A."/>
            <person name="Vitale D."/>
            <person name="Liguori R."/>
            <person name="Piravandi E."/>
            <person name="Massenet O."/>
            <person name="Quigley F."/>
            <person name="Clabauld G."/>
            <person name="Muendlein A."/>
            <person name="Felber R."/>
            <person name="Schnabl S."/>
            <person name="Hiller R."/>
            <person name="Schmidt W."/>
            <person name="Lecharny A."/>
            <person name="Aubourg S."/>
            <person name="Chefdor F."/>
            <person name="Cooke R."/>
            <person name="Berger C."/>
            <person name="Monfort A."/>
            <person name="Casacuberta E."/>
            <person name="Gibbons T."/>
            <person name="Weber N."/>
            <person name="Vandenbol M."/>
            <person name="Bargues M."/>
            <person name="Terol J."/>
            <person name="Torres A."/>
            <person name="Perez-Perez A."/>
            <person name="Purnelle B."/>
            <person name="Bent E."/>
            <person name="Johnson S."/>
            <person name="Tacon D."/>
            <person name="Jesse T."/>
            <person name="Heijnen L."/>
            <person name="Schwarz S."/>
            <person name="Scholler P."/>
            <person name="Heber S."/>
            <person name="Francs P."/>
            <person name="Bielke C."/>
            <person name="Frishman D."/>
            <person name="Haase D."/>
            <person name="Lemcke K."/>
            <person name="Mewes H.-W."/>
            <person name="Stocker S."/>
            <person name="Zaccaria P."/>
            <person name="Bevan M."/>
            <person name="Wilson R.K."/>
            <person name="de la Bastide M."/>
            <person name="Habermann K."/>
            <person name="Parnell L."/>
            <person name="Dedhia N."/>
            <person name="Gnoj L."/>
            <person name="Schutz K."/>
            <person name="Huang E."/>
            <person name="Spiegel L."/>
            <person name="Sekhon M."/>
            <person name="Murray J."/>
            <person name="Sheet P."/>
            <person name="Cordes M."/>
            <person name="Abu-Threideh J."/>
            <person name="Stoneking T."/>
            <person name="Kalicki J."/>
            <person name="Graves T."/>
            <person name="Harmon G."/>
            <person name="Edwards J."/>
            <person name="Latreille P."/>
            <person name="Courtney L."/>
            <person name="Cloud J."/>
            <person name="Abbott A."/>
            <person name="Scott K."/>
            <person name="Johnson D."/>
            <person name="Minx P."/>
            <person name="Bentley D."/>
            <person name="Fulton B."/>
            <person name="Miller N."/>
            <person name="Greco T."/>
            <person name="Kemp K."/>
            <person name="Kramer J."/>
            <person name="Fulton L."/>
            <person name="Mardis E."/>
            <person name="Dante M."/>
            <person name="Pepin K."/>
            <person name="Hillier L.W."/>
            <person name="Nelson J."/>
            <person name="Spieth J."/>
            <person name="Ryan E."/>
            <person name="Andrews S."/>
            <person name="Geisel C."/>
            <person name="Layman D."/>
            <person name="Du H."/>
            <person name="Ali J."/>
            <person name="Berghoff A."/>
            <person name="Jones K."/>
            <person name="Drone K."/>
            <person name="Cotton M."/>
            <person name="Joshu C."/>
            <person name="Antonoiu B."/>
            <person name="Zidanic M."/>
            <person name="Strong C."/>
            <person name="Sun H."/>
            <person name="Lamar B."/>
            <person name="Yordan C."/>
            <person name="Ma P."/>
            <person name="Zhong J."/>
            <person name="Preston R."/>
            <person name="Vil D."/>
            <person name="Shekher M."/>
            <person name="Matero A."/>
            <person name="Shah R."/>
            <person name="Swaby I.K."/>
            <person name="O'Shaughnessy A."/>
            <person name="Rodriguez M."/>
            <person name="Hoffman J."/>
            <person name="Till S."/>
            <person name="Granat S."/>
            <person name="Shohdy N."/>
            <person name="Hasegawa A."/>
            <person name="Hameed A."/>
            <person name="Lodhi M."/>
            <person name="Johnson A."/>
            <person name="Chen E."/>
            <person name="Marra M.A."/>
            <person name="Martienssen R."/>
            <person name="McCombie W.R."/>
        </authorList>
    </citation>
    <scope>NUCLEOTIDE SEQUENCE [LARGE SCALE GENOMIC DNA]</scope>
    <source>
        <strain>cv. Columbia</strain>
    </source>
</reference>
<reference key="2">
    <citation type="journal article" date="2017" name="Plant J.">
        <title>Araport11: a complete reannotation of the Arabidopsis thaliana reference genome.</title>
        <authorList>
            <person name="Cheng C.Y."/>
            <person name="Krishnakumar V."/>
            <person name="Chan A.P."/>
            <person name="Thibaud-Nissen F."/>
            <person name="Schobel S."/>
            <person name="Town C.D."/>
        </authorList>
    </citation>
    <scope>GENOME REANNOTATION</scope>
    <source>
        <strain>cv. Columbia</strain>
    </source>
</reference>
<reference key="3">
    <citation type="journal article" date="2004" name="Plant Physiol.">
        <title>Genome-wide analysis of the cyclin family in Arabidopsis and comparative phylogenetic analysis of plant cyclin-like proteins.</title>
        <authorList>
            <person name="Wang G."/>
            <person name="Kong H."/>
            <person name="Sun Y."/>
            <person name="Zhang X."/>
            <person name="Zhang W."/>
            <person name="Altman N."/>
            <person name="dePamphilis C.W."/>
            <person name="Ma H."/>
        </authorList>
    </citation>
    <scope>GENE FAMILY</scope>
    <scope>NOMENCLATURE</scope>
</reference>